<dbReference type="EC" id="6.1.1.9" evidence="1"/>
<dbReference type="EMBL" id="AE008384">
    <property type="protein sequence ID" value="AAM30010.1"/>
    <property type="molecule type" value="Genomic_DNA"/>
</dbReference>
<dbReference type="RefSeq" id="WP_011032268.1">
    <property type="nucleotide sequence ID" value="NC_003901.1"/>
</dbReference>
<dbReference type="SMR" id="Q8Q024"/>
<dbReference type="KEGG" id="mma:MM_0314"/>
<dbReference type="PATRIC" id="fig|192952.21.peg.386"/>
<dbReference type="eggNOG" id="arCOG00808">
    <property type="taxonomic scope" value="Archaea"/>
</dbReference>
<dbReference type="HOGENOM" id="CLU_001493_0_2_2"/>
<dbReference type="Proteomes" id="UP000000595">
    <property type="component" value="Chromosome"/>
</dbReference>
<dbReference type="GO" id="GO:0005829">
    <property type="term" value="C:cytosol"/>
    <property type="evidence" value="ECO:0007669"/>
    <property type="project" value="TreeGrafter"/>
</dbReference>
<dbReference type="GO" id="GO:0002161">
    <property type="term" value="F:aminoacyl-tRNA deacylase activity"/>
    <property type="evidence" value="ECO:0007669"/>
    <property type="project" value="InterPro"/>
</dbReference>
<dbReference type="GO" id="GO:0005524">
    <property type="term" value="F:ATP binding"/>
    <property type="evidence" value="ECO:0007669"/>
    <property type="project" value="UniProtKB-UniRule"/>
</dbReference>
<dbReference type="GO" id="GO:0004832">
    <property type="term" value="F:valine-tRNA ligase activity"/>
    <property type="evidence" value="ECO:0007669"/>
    <property type="project" value="UniProtKB-UniRule"/>
</dbReference>
<dbReference type="GO" id="GO:0006438">
    <property type="term" value="P:valyl-tRNA aminoacylation"/>
    <property type="evidence" value="ECO:0007669"/>
    <property type="project" value="UniProtKB-UniRule"/>
</dbReference>
<dbReference type="CDD" id="cd07962">
    <property type="entry name" value="Anticodon_Ia_Val"/>
    <property type="match status" value="1"/>
</dbReference>
<dbReference type="CDD" id="cd00817">
    <property type="entry name" value="ValRS_core"/>
    <property type="match status" value="1"/>
</dbReference>
<dbReference type="FunFam" id="1.10.730.10:FF:000033">
    <property type="entry name" value="Valine--tRNA ligase"/>
    <property type="match status" value="1"/>
</dbReference>
<dbReference type="FunFam" id="3.40.50.620:FF:000192">
    <property type="entry name" value="Valine--tRNA ligase"/>
    <property type="match status" value="1"/>
</dbReference>
<dbReference type="FunFam" id="3.40.50.620:FF:000324">
    <property type="entry name" value="Valine--tRNA ligase"/>
    <property type="match status" value="1"/>
</dbReference>
<dbReference type="Gene3D" id="3.30.720.200">
    <property type="match status" value="1"/>
</dbReference>
<dbReference type="Gene3D" id="3.40.50.620">
    <property type="entry name" value="HUPs"/>
    <property type="match status" value="2"/>
</dbReference>
<dbReference type="Gene3D" id="1.10.730.10">
    <property type="entry name" value="Isoleucyl-tRNA Synthetase, Domain 1"/>
    <property type="match status" value="1"/>
</dbReference>
<dbReference type="HAMAP" id="MF_02005">
    <property type="entry name" value="Val_tRNA_synth_type2"/>
    <property type="match status" value="1"/>
</dbReference>
<dbReference type="InterPro" id="IPR001412">
    <property type="entry name" value="aa-tRNA-synth_I_CS"/>
</dbReference>
<dbReference type="InterPro" id="IPR002300">
    <property type="entry name" value="aa-tRNA-synth_Ia"/>
</dbReference>
<dbReference type="InterPro" id="IPR033705">
    <property type="entry name" value="Anticodon_Ia_Val"/>
</dbReference>
<dbReference type="InterPro" id="IPR013155">
    <property type="entry name" value="M/V/L/I-tRNA-synth_anticd-bd"/>
</dbReference>
<dbReference type="InterPro" id="IPR014729">
    <property type="entry name" value="Rossmann-like_a/b/a_fold"/>
</dbReference>
<dbReference type="InterPro" id="IPR009080">
    <property type="entry name" value="tRNAsynth_Ia_anticodon-bd"/>
</dbReference>
<dbReference type="InterPro" id="IPR009008">
    <property type="entry name" value="Val/Leu/Ile-tRNA-synth_edit"/>
</dbReference>
<dbReference type="InterPro" id="IPR022874">
    <property type="entry name" value="Valine-tRNA_ligase_type_2"/>
</dbReference>
<dbReference type="InterPro" id="IPR002303">
    <property type="entry name" value="Valyl-tRNA_ligase"/>
</dbReference>
<dbReference type="NCBIfam" id="NF009687">
    <property type="entry name" value="PRK13208.1"/>
    <property type="match status" value="1"/>
</dbReference>
<dbReference type="NCBIfam" id="TIGR00422">
    <property type="entry name" value="valS"/>
    <property type="match status" value="1"/>
</dbReference>
<dbReference type="PANTHER" id="PTHR11946:SF93">
    <property type="entry name" value="VALINE--TRNA LIGASE, CHLOROPLASTIC_MITOCHONDRIAL 2"/>
    <property type="match status" value="1"/>
</dbReference>
<dbReference type="PANTHER" id="PTHR11946">
    <property type="entry name" value="VALYL-TRNA SYNTHETASES"/>
    <property type="match status" value="1"/>
</dbReference>
<dbReference type="Pfam" id="PF08264">
    <property type="entry name" value="Anticodon_1"/>
    <property type="match status" value="1"/>
</dbReference>
<dbReference type="Pfam" id="PF19302">
    <property type="entry name" value="DUF5915"/>
    <property type="match status" value="1"/>
</dbReference>
<dbReference type="Pfam" id="PF00133">
    <property type="entry name" value="tRNA-synt_1"/>
    <property type="match status" value="1"/>
</dbReference>
<dbReference type="PRINTS" id="PR00986">
    <property type="entry name" value="TRNASYNTHVAL"/>
</dbReference>
<dbReference type="SUPFAM" id="SSF47323">
    <property type="entry name" value="Anticodon-binding domain of a subclass of class I aminoacyl-tRNA synthetases"/>
    <property type="match status" value="1"/>
</dbReference>
<dbReference type="SUPFAM" id="SSF52374">
    <property type="entry name" value="Nucleotidylyl transferase"/>
    <property type="match status" value="1"/>
</dbReference>
<dbReference type="SUPFAM" id="SSF50677">
    <property type="entry name" value="ValRS/IleRS/LeuRS editing domain"/>
    <property type="match status" value="1"/>
</dbReference>
<dbReference type="PROSITE" id="PS00178">
    <property type="entry name" value="AA_TRNA_LIGASE_I"/>
    <property type="match status" value="1"/>
</dbReference>
<feature type="chain" id="PRO_0000224627" description="Valine--tRNA ligase">
    <location>
        <begin position="1"/>
        <end position="869"/>
    </location>
</feature>
<feature type="short sequence motif" description="'HIGH' region">
    <location>
        <begin position="47"/>
        <end position="57"/>
    </location>
</feature>
<feature type="short sequence motif" description="'KMSKS' region">
    <location>
        <begin position="521"/>
        <end position="525"/>
    </location>
</feature>
<feature type="binding site" evidence="1">
    <location>
        <position position="524"/>
    </location>
    <ligand>
        <name>ATP</name>
        <dbReference type="ChEBI" id="CHEBI:30616"/>
    </ligand>
</feature>
<gene>
    <name evidence="1" type="primary">valS</name>
    <name type="ordered locus">MM_0314</name>
</gene>
<protein>
    <recommendedName>
        <fullName evidence="1">Valine--tRNA ligase</fullName>
        <ecNumber evidence="1">6.1.1.9</ecNumber>
    </recommendedName>
    <alternativeName>
        <fullName evidence="1">Valyl-tRNA synthetase</fullName>
        <shortName evidence="1">ValRS</shortName>
    </alternativeName>
</protein>
<evidence type="ECO:0000255" key="1">
    <source>
        <dbReference type="HAMAP-Rule" id="MF_02005"/>
    </source>
</evidence>
<reference key="1">
    <citation type="journal article" date="2002" name="J. Mol. Microbiol. Biotechnol.">
        <title>The genome of Methanosarcina mazei: evidence for lateral gene transfer between Bacteria and Archaea.</title>
        <authorList>
            <person name="Deppenmeier U."/>
            <person name="Johann A."/>
            <person name="Hartsch T."/>
            <person name="Merkl R."/>
            <person name="Schmitz R.A."/>
            <person name="Martinez-Arias R."/>
            <person name="Henne A."/>
            <person name="Wiezer A."/>
            <person name="Baeumer S."/>
            <person name="Jacobi C."/>
            <person name="Brueggemann H."/>
            <person name="Lienard T."/>
            <person name="Christmann A."/>
            <person name="Boemecke M."/>
            <person name="Steckel S."/>
            <person name="Bhattacharyya A."/>
            <person name="Lykidis A."/>
            <person name="Overbeek R."/>
            <person name="Klenk H.-P."/>
            <person name="Gunsalus R.P."/>
            <person name="Fritz H.-J."/>
            <person name="Gottschalk G."/>
        </authorList>
    </citation>
    <scope>NUCLEOTIDE SEQUENCE [LARGE SCALE GENOMIC DNA]</scope>
    <source>
        <strain>ATCC BAA-159 / DSM 3647 / Goe1 / Go1 / JCM 11833 / OCM 88</strain>
    </source>
</reference>
<organism>
    <name type="scientific">Methanosarcina mazei (strain ATCC BAA-159 / DSM 3647 / Goe1 / Go1 / JCM 11833 / OCM 88)</name>
    <name type="common">Methanosarcina frisia</name>
    <dbReference type="NCBI Taxonomy" id="192952"/>
    <lineage>
        <taxon>Archaea</taxon>
        <taxon>Methanobacteriati</taxon>
        <taxon>Methanobacteriota</taxon>
        <taxon>Stenosarchaea group</taxon>
        <taxon>Methanomicrobia</taxon>
        <taxon>Methanosarcinales</taxon>
        <taxon>Methanosarcinaceae</taxon>
        <taxon>Methanosarcina</taxon>
    </lineage>
</organism>
<name>SYV_METMA</name>
<proteinExistence type="inferred from homology"/>
<keyword id="KW-0030">Aminoacyl-tRNA synthetase</keyword>
<keyword id="KW-0067">ATP-binding</keyword>
<keyword id="KW-0963">Cytoplasm</keyword>
<keyword id="KW-0436">Ligase</keyword>
<keyword id="KW-0547">Nucleotide-binding</keyword>
<keyword id="KW-0648">Protein biosynthesis</keyword>
<sequence length="869" mass="99130">MTESEIPKEYNANEVEKKWMEKWNLSMYHFNWGEDTRPQYIIDTPPPYPTGNFHIGNALNWCYIDFVARYKRMRGYNVMFPQGWDCHGLPTEVKVEETHGITKNQVPRAEFRRMCRELTAGNIDKMRQTMLRLGFSVDWSNEFVTMEPSYFVKTQKSFVRMYNNGHIYHEDHPVNWCPRCETAIAFAEVEYDQGQTKLNFVHFDKVDIATTRPELMAACVAVAVNPEDERYSQYIGKEIEVPLFGQKVTLIADEAVEPEFGTGAVMICTFGDKQDVRWWAKYGLPLIKAIDKQGRMTKAAGKYEGMSIPECRQAVISDLRDAGFLYNQKPLEQNVGLCWRCDTPIEILSEPQWFVKINHEGILKAADEINWYPEYMKVRLQNWTGTMEWDWCISRQRIFATPIPIWYCKKCGEVMIAEESWLPIDPNENVPKKACACGSTEFEPETDVLDTWMDSSITALHVSGWESEHDLRLPAQIRPQGHDIIRTWAFYTILRSLALEGKRPWDSIVINGMVLGPDGHKMSKSLGNVISPEEVTTQYSADAFRQWGAVGGSTGSDVMFRWKDVVSASRFLQKMWSIYRFSMSHLKDFDPADAENFPPDSLYTIDRWLLSKLNRLVESTTKELDGYQFDSTFKAIRGFAWEVLADNYLELVKGRLYGENKEGRKAAQYVLYTTTRTLSLLLAPFIPFFAEEMYSRFDSASVHTRAWPAVNESLMSEEAEAAGEMIKDITGEVRRYKSDLGMALNAPLKKIEIYNTQIDTGDIAGATNSEVELMEGAPSFDYVPVEVKPNMGILGPRFRKDAGAIVKALKAEDPASVEAQIASGRITVTVNGEKIELEPEAVEIRKEVISGGREVDVLDIKGAVVVIVR</sequence>
<comment type="function">
    <text evidence="1">Catalyzes the attachment of valine to tRNA(Val). As ValRS can inadvertently accommodate and process structurally similar amino acids such as threonine, to avoid such errors, it has a 'posttransfer' editing activity that hydrolyzes mischarged Thr-tRNA(Val) in a tRNA-dependent manner.</text>
</comment>
<comment type="catalytic activity">
    <reaction evidence="1">
        <text>tRNA(Val) + L-valine + ATP = L-valyl-tRNA(Val) + AMP + diphosphate</text>
        <dbReference type="Rhea" id="RHEA:10704"/>
        <dbReference type="Rhea" id="RHEA-COMP:9672"/>
        <dbReference type="Rhea" id="RHEA-COMP:9708"/>
        <dbReference type="ChEBI" id="CHEBI:30616"/>
        <dbReference type="ChEBI" id="CHEBI:33019"/>
        <dbReference type="ChEBI" id="CHEBI:57762"/>
        <dbReference type="ChEBI" id="CHEBI:78442"/>
        <dbReference type="ChEBI" id="CHEBI:78537"/>
        <dbReference type="ChEBI" id="CHEBI:456215"/>
        <dbReference type="EC" id="6.1.1.9"/>
    </reaction>
</comment>
<comment type="subcellular location">
    <subcellularLocation>
        <location evidence="1">Cytoplasm</location>
    </subcellularLocation>
</comment>
<comment type="domain">
    <text evidence="1">ValRS has two distinct active sites: one for aminoacylation and one for editing. The misactivated threonine is translocated from the active site to the editing site.</text>
</comment>
<comment type="similarity">
    <text evidence="1">Belongs to the class-I aminoacyl-tRNA synthetase family. ValS type 2 subfamily.</text>
</comment>
<accession>Q8Q024</accession>